<protein>
    <recommendedName>
        <fullName>Alpha-amylase/trypsin inhibitor CM3</fullName>
    </recommendedName>
    <alternativeName>
        <fullName>Chloroform/methanol-soluble protein CM3</fullName>
    </alternativeName>
</protein>
<comment type="function">
    <text>Alpha-amylase/trypsin inhibitor. It could be involved in insect defense mechanisms.</text>
</comment>
<comment type="subunit">
    <text>Subunit of the tetrameric inhibitor.</text>
</comment>
<comment type="subcellular location">
    <subcellularLocation>
        <location>Secreted</location>
    </subcellularLocation>
</comment>
<comment type="tissue specificity">
    <text>Developing endosperm.</text>
</comment>
<comment type="PTM">
    <text evidence="2">Five disulfide bonds, which are essential for the inhibitor activity, are probably present.</text>
</comment>
<comment type="miscellaneous">
    <text>CM proteins would be involved in the cooking quality of pasta.</text>
</comment>
<comment type="similarity">
    <text evidence="2">Belongs to the protease inhibitor I6 (cereal trypsin/alpha-amylase inhibitor) family.</text>
</comment>
<evidence type="ECO:0000269" key="1">
    <source ref="3"/>
</evidence>
<evidence type="ECO:0000305" key="2"/>
<keyword id="KW-0022">Alpha-amylase inhibitor</keyword>
<keyword id="KW-0903">Direct protein sequencing</keyword>
<keyword id="KW-1015">Disulfide bond</keyword>
<keyword id="KW-0646">Protease inhibitor</keyword>
<keyword id="KW-1185">Reference proteome</keyword>
<keyword id="KW-0964">Secreted</keyword>
<keyword id="KW-0722">Serine protease inhibitor</keyword>
<keyword id="KW-0732">Signal</keyword>
<dbReference type="EMBL" id="X17574">
    <property type="protein sequence ID" value="CAA35597.1"/>
    <property type="molecule type" value="mRNA"/>
</dbReference>
<dbReference type="EMBL" id="X61032">
    <property type="protein sequence ID" value="CAA43367.1"/>
    <property type="molecule type" value="mRNA"/>
</dbReference>
<dbReference type="PIR" id="S10029">
    <property type="entry name" value="S10029"/>
</dbReference>
<dbReference type="RefSeq" id="NP_001392679.1">
    <property type="nucleotide sequence ID" value="NM_001405750.1"/>
</dbReference>
<dbReference type="SMR" id="P17314"/>
<dbReference type="STRING" id="4565.P17314"/>
<dbReference type="Allergome" id="1051">
    <property type="allergen name" value="Tri a 30"/>
</dbReference>
<dbReference type="Allergome" id="8191">
    <property type="allergen name" value="Tri a 30.0101"/>
</dbReference>
<dbReference type="MEROPS" id="I06.004"/>
<dbReference type="PaxDb" id="4565-Traes_4BL_CE02BBD12.1"/>
<dbReference type="EnsemblPlants" id="TraesARI4B03G02424440.1">
    <property type="protein sequence ID" value="TraesARI4B03G02424440.1.CDS1"/>
    <property type="gene ID" value="TraesARI4B03G02424440"/>
</dbReference>
<dbReference type="EnsemblPlants" id="TraesCAD_scaffold_059374_01G000200.1">
    <property type="protein sequence ID" value="TraesCAD_scaffold_059374_01G000200.1"/>
    <property type="gene ID" value="TraesCAD_scaffold_059374_01G000200"/>
</dbReference>
<dbReference type="EnsemblPlants" id="TraesCLE_scaffold_030329_01G000100.1">
    <property type="protein sequence ID" value="TraesCLE_scaffold_030329_01G000100.1"/>
    <property type="gene ID" value="TraesCLE_scaffold_030329_01G000100"/>
</dbReference>
<dbReference type="EnsemblPlants" id="TraesCS4B02G328100.1">
    <property type="protein sequence ID" value="TraesCS4B02G328100.1.cds1"/>
    <property type="gene ID" value="TraesCS4B02G328100"/>
</dbReference>
<dbReference type="EnsemblPlants" id="TraesCS4B03G0849100.1">
    <property type="protein sequence ID" value="TraesCS4B03G0849100.1.CDS1"/>
    <property type="gene ID" value="TraesCS4B03G0849100"/>
</dbReference>
<dbReference type="EnsemblPlants" id="TraesJAG4B03G02385240.1">
    <property type="protein sequence ID" value="TraesJAG4B03G02385240.1.CDS1"/>
    <property type="gene ID" value="TraesJAG4B03G02385240"/>
</dbReference>
<dbReference type="EnsemblPlants" id="TraesJUL4B03G02406420.1">
    <property type="protein sequence ID" value="TraesJUL4B03G02406420.1.CDS1"/>
    <property type="gene ID" value="TraesJUL4B03G02406420"/>
</dbReference>
<dbReference type="EnsemblPlants" id="TraesKAR4B01G0414260.1">
    <property type="protein sequence ID" value="cds.TraesKAR4B01G0414260.1"/>
    <property type="gene ID" value="TraesKAR4B01G0414260"/>
</dbReference>
<dbReference type="EnsemblPlants" id="TraesLAC4B03G02340480.1">
    <property type="protein sequence ID" value="TraesLAC4B03G02340480.1.CDS1"/>
    <property type="gene ID" value="TraesLAC4B03G02340480"/>
</dbReference>
<dbReference type="EnsemblPlants" id="TraesLDM4B03G02388410.1">
    <property type="protein sequence ID" value="TraesLDM4B03G02388410.1.CDS1"/>
    <property type="gene ID" value="TraesLDM4B03G02388410"/>
</dbReference>
<dbReference type="EnsemblPlants" id="TraesMAC4B03G02386240.1">
    <property type="protein sequence ID" value="TraesMAC4B03G02386240.1.CDS1"/>
    <property type="gene ID" value="TraesMAC4B03G02386240"/>
</dbReference>
<dbReference type="EnsemblPlants" id="TraesNOR4B03G02405190.1">
    <property type="protein sequence ID" value="TraesNOR4B03G02405190.1.CDS1"/>
    <property type="gene ID" value="TraesNOR4B03G02405190"/>
</dbReference>
<dbReference type="EnsemblPlants" id="TraesPARA_EIv1.0_1391150.1">
    <property type="protein sequence ID" value="TraesPARA_EIv1.0_1391150.1.CDS1"/>
    <property type="gene ID" value="TraesPARA_EIv1.0_1391150"/>
</dbReference>
<dbReference type="EnsemblPlants" id="TraesRN4B0100879200.1">
    <property type="protein sequence ID" value="TraesRN4B0100879200.1"/>
    <property type="gene ID" value="TraesRN4B0100879200"/>
</dbReference>
<dbReference type="EnsemblPlants" id="TraesROB_scaffold_059406_01G000100.1">
    <property type="protein sequence ID" value="TraesROB_scaffold_059406_01G000100.1"/>
    <property type="gene ID" value="TraesROB_scaffold_059406_01G000100"/>
</dbReference>
<dbReference type="EnsemblPlants" id="TraesSTA4B03G02381920.1">
    <property type="protein sequence ID" value="TraesSTA4B03G02381920.1.CDS1"/>
    <property type="gene ID" value="TraesSTA4B03G02381920"/>
</dbReference>
<dbReference type="EnsemblPlants" id="TraesSYM4B03G02414270.1">
    <property type="protein sequence ID" value="TraesSYM4B03G02414270.1.CDS1"/>
    <property type="gene ID" value="TraesSYM4B03G02414270"/>
</dbReference>
<dbReference type="EnsemblPlants" id="TraesWEE_scaffold_013736_01G000500.1">
    <property type="protein sequence ID" value="TraesWEE_scaffold_013736_01G000500.1"/>
    <property type="gene ID" value="TraesWEE_scaffold_013736_01G000500"/>
</dbReference>
<dbReference type="GeneID" id="543281"/>
<dbReference type="Gramene" id="TraesARI4B03G02424440.1">
    <property type="protein sequence ID" value="TraesARI4B03G02424440.1.CDS1"/>
    <property type="gene ID" value="TraesARI4B03G02424440"/>
</dbReference>
<dbReference type="Gramene" id="TraesCAD_scaffold_059374_01G000200.1">
    <property type="protein sequence ID" value="TraesCAD_scaffold_059374_01G000200.1"/>
    <property type="gene ID" value="TraesCAD_scaffold_059374_01G000200"/>
</dbReference>
<dbReference type="Gramene" id="TraesCLE_scaffold_030329_01G000100.1">
    <property type="protein sequence ID" value="TraesCLE_scaffold_030329_01G000100.1"/>
    <property type="gene ID" value="TraesCLE_scaffold_030329_01G000100"/>
</dbReference>
<dbReference type="Gramene" id="TraesCS4B02G328100.1">
    <property type="protein sequence ID" value="TraesCS4B02G328100.1.cds1"/>
    <property type="gene ID" value="TraesCS4B02G328100"/>
</dbReference>
<dbReference type="Gramene" id="TraesCS4B03G0849100.1">
    <property type="protein sequence ID" value="TraesCS4B03G0849100.1.CDS1"/>
    <property type="gene ID" value="TraesCS4B03G0849100"/>
</dbReference>
<dbReference type="Gramene" id="TraesJAG4B03G02385240.1">
    <property type="protein sequence ID" value="TraesJAG4B03G02385240.1.CDS1"/>
    <property type="gene ID" value="TraesJAG4B03G02385240"/>
</dbReference>
<dbReference type="Gramene" id="TraesJUL4B03G02406420.1">
    <property type="protein sequence ID" value="TraesJUL4B03G02406420.1.CDS1"/>
    <property type="gene ID" value="TraesJUL4B03G02406420"/>
</dbReference>
<dbReference type="Gramene" id="TraesKAR4B01G0414260.1">
    <property type="protein sequence ID" value="cds.TraesKAR4B01G0414260.1"/>
    <property type="gene ID" value="TraesKAR4B01G0414260"/>
</dbReference>
<dbReference type="Gramene" id="TraesLAC4B03G02340480.1">
    <property type="protein sequence ID" value="TraesLAC4B03G02340480.1.CDS1"/>
    <property type="gene ID" value="TraesLAC4B03G02340480"/>
</dbReference>
<dbReference type="Gramene" id="TraesLDM4B03G02388410.1">
    <property type="protein sequence ID" value="TraesLDM4B03G02388410.1.CDS1"/>
    <property type="gene ID" value="TraesLDM4B03G02388410"/>
</dbReference>
<dbReference type="Gramene" id="TraesMAC4B03G02386240.1">
    <property type="protein sequence ID" value="TraesMAC4B03G02386240.1.CDS1"/>
    <property type="gene ID" value="TraesMAC4B03G02386240"/>
</dbReference>
<dbReference type="Gramene" id="TraesNOR4B03G02405190.1">
    <property type="protein sequence ID" value="TraesNOR4B03G02405190.1.CDS1"/>
    <property type="gene ID" value="TraesNOR4B03G02405190"/>
</dbReference>
<dbReference type="Gramene" id="TraesPARA_EIv1.0_1391150.1">
    <property type="protein sequence ID" value="TraesPARA_EIv1.0_1391150.1.CDS1"/>
    <property type="gene ID" value="TraesPARA_EIv1.0_1391150"/>
</dbReference>
<dbReference type="Gramene" id="TraesRN4B0100879200.1">
    <property type="protein sequence ID" value="TraesRN4B0100879200.1"/>
    <property type="gene ID" value="TraesRN4B0100879200"/>
</dbReference>
<dbReference type="Gramene" id="TraesROB_scaffold_059406_01G000100.1">
    <property type="protein sequence ID" value="TraesROB_scaffold_059406_01G000100.1"/>
    <property type="gene ID" value="TraesROB_scaffold_059406_01G000100"/>
</dbReference>
<dbReference type="Gramene" id="TraesSTA4B03G02381920.1">
    <property type="protein sequence ID" value="TraesSTA4B03G02381920.1.CDS1"/>
    <property type="gene ID" value="TraesSTA4B03G02381920"/>
</dbReference>
<dbReference type="Gramene" id="TraesSYM4B03G02414270.1">
    <property type="protein sequence ID" value="TraesSYM4B03G02414270.1.CDS1"/>
    <property type="gene ID" value="TraesSYM4B03G02414270"/>
</dbReference>
<dbReference type="Gramene" id="TraesWEE_scaffold_013736_01G000500.1">
    <property type="protein sequence ID" value="TraesWEE_scaffold_013736_01G000500.1"/>
    <property type="gene ID" value="TraesWEE_scaffold_013736_01G000500"/>
</dbReference>
<dbReference type="HOGENOM" id="CLU_113497_1_1_1"/>
<dbReference type="OMA" id="PAYCRCT"/>
<dbReference type="OrthoDB" id="603651at2759"/>
<dbReference type="Proteomes" id="UP000019116">
    <property type="component" value="Chromosome 4B"/>
</dbReference>
<dbReference type="ExpressionAtlas" id="P17314">
    <property type="expression patterns" value="baseline and differential"/>
</dbReference>
<dbReference type="GO" id="GO:0005576">
    <property type="term" value="C:extracellular region"/>
    <property type="evidence" value="ECO:0007669"/>
    <property type="project" value="UniProtKB-SubCell"/>
</dbReference>
<dbReference type="GO" id="GO:0015066">
    <property type="term" value="F:alpha-amylase inhibitor activity"/>
    <property type="evidence" value="ECO:0007669"/>
    <property type="project" value="UniProtKB-KW"/>
</dbReference>
<dbReference type="GO" id="GO:0004867">
    <property type="term" value="F:serine-type endopeptidase inhibitor activity"/>
    <property type="evidence" value="ECO:0007669"/>
    <property type="project" value="UniProtKB-KW"/>
</dbReference>
<dbReference type="CDD" id="cd00261">
    <property type="entry name" value="AAI_SS"/>
    <property type="match status" value="1"/>
</dbReference>
<dbReference type="Gene3D" id="1.10.110.10">
    <property type="entry name" value="Plant lipid-transfer and hydrophobic proteins"/>
    <property type="match status" value="1"/>
</dbReference>
<dbReference type="InterPro" id="IPR006106">
    <property type="entry name" value="Allergen/soft/tryp_amyl_inhib"/>
</dbReference>
<dbReference type="InterPro" id="IPR006105">
    <property type="entry name" value="Allergen/tryp_amyl_inhib_CS"/>
</dbReference>
<dbReference type="InterPro" id="IPR036312">
    <property type="entry name" value="Bifun_inhib/LTP/seed_sf"/>
</dbReference>
<dbReference type="InterPro" id="IPR016140">
    <property type="entry name" value="Bifunc_inhib/LTP/seed_store"/>
</dbReference>
<dbReference type="PANTHER" id="PTHR34481:SF5">
    <property type="entry name" value="ALPHA-AMYLASE_TRYPSIN INHIBITOR CM3"/>
    <property type="match status" value="1"/>
</dbReference>
<dbReference type="PANTHER" id="PTHR34481">
    <property type="entry name" value="TRYPSIN/FACTOR XIIA INHIBITOR-RELATED"/>
    <property type="match status" value="1"/>
</dbReference>
<dbReference type="Pfam" id="PF00234">
    <property type="entry name" value="Tryp_alpha_amyl"/>
    <property type="match status" value="1"/>
</dbReference>
<dbReference type="PRINTS" id="PR00808">
    <property type="entry name" value="AMLASEINHBTR"/>
</dbReference>
<dbReference type="SMART" id="SM00499">
    <property type="entry name" value="AAI"/>
    <property type="match status" value="1"/>
</dbReference>
<dbReference type="SUPFAM" id="SSF47699">
    <property type="entry name" value="Bifunctional inhibitor/lipid-transfer protein/seed storage 2S albumin"/>
    <property type="match status" value="1"/>
</dbReference>
<dbReference type="PROSITE" id="PS00426">
    <property type="entry name" value="CEREAL_TRYP_AMYL_INH"/>
    <property type="match status" value="1"/>
</dbReference>
<organism>
    <name type="scientific">Triticum aestivum</name>
    <name type="common">Wheat</name>
    <dbReference type="NCBI Taxonomy" id="4565"/>
    <lineage>
        <taxon>Eukaryota</taxon>
        <taxon>Viridiplantae</taxon>
        <taxon>Streptophyta</taxon>
        <taxon>Embryophyta</taxon>
        <taxon>Tracheophyta</taxon>
        <taxon>Spermatophyta</taxon>
        <taxon>Magnoliopsida</taxon>
        <taxon>Liliopsida</taxon>
        <taxon>Poales</taxon>
        <taxon>Poaceae</taxon>
        <taxon>BOP clade</taxon>
        <taxon>Pooideae</taxon>
        <taxon>Triticodae</taxon>
        <taxon>Triticeae</taxon>
        <taxon>Triticinae</taxon>
        <taxon>Triticum</taxon>
    </lineage>
</organism>
<name>IAAC3_WHEAT</name>
<proteinExistence type="evidence at protein level"/>
<reference key="1">
    <citation type="journal article" date="1990" name="Plant Mol. Biol.">
        <title>Cloning of cDNA and chromosomal location of genes encoding the three types of subunits of the wheat tetrameric inhibitor of insect alpha-amylase.</title>
        <authorList>
            <person name="Garcia-Maroto F."/>
            <person name="Marana C."/>
            <person name="Mena M."/>
            <person name="Garcia-Olmedo F."/>
            <person name="Carbonero P."/>
        </authorList>
    </citation>
    <scope>NUCLEOTIDE SEQUENCE [MRNA]</scope>
    <source>
        <strain>cv. Chinese Spring</strain>
        <tissue>Endosperm</tissue>
    </source>
</reference>
<reference key="2">
    <citation type="submission" date="1991-06" db="EMBL/GenBank/DDBJ databases">
        <authorList>
            <person name="Gautier M.-F."/>
            <person name="Alary R."/>
            <person name="Lullien V."/>
            <person name="Joudrier P."/>
        </authorList>
    </citation>
    <scope>NUCLEOTIDE SEQUENCE [MRNA]</scope>
    <source>
        <strain>cv. Agathe</strain>
        <tissue>Seed</tissue>
    </source>
</reference>
<reference key="3">
    <citation type="journal article" date="1984" name="FEBS Lett.">
        <title>N-terminal amino acid sequence of chloroform/methanol-soluble proteins and albumins from endosperm of wheat, barley and related species.</title>
        <authorList>
            <person name="Shewry P.R."/>
            <person name="Lafiandra D."/>
            <person name="Salcedo G."/>
            <person name="Aragoncillo C."/>
            <person name="Garcia-Olmedo F."/>
            <person name="Lew E.J.-L."/>
            <person name="Dietler M.D."/>
            <person name="Kasarda D.D."/>
        </authorList>
    </citation>
    <scope>PROTEIN SEQUENCE OF 26-60</scope>
    <source>
        <strain>cv. Turgidum</strain>
        <tissue>Endosperm</tissue>
    </source>
</reference>
<sequence length="168" mass="18221">MACKSSCSLLLLAAVLLSVLAAASASGSCVPGVAFRTNLLPHCRDYVLQQTCGTFTPGSKLPEWMTSASIYSPGKPYLAKLYCCQELAEISQQCRCEALRYFIALPVPSQPVDPRSGNVGESGLIDLPGCPREMQWDFVRLLVAPGQCNLATIHNVRYCPAVEQPLWI</sequence>
<accession>P17314</accession>
<feature type="signal peptide" evidence="1">
    <location>
        <begin position="1"/>
        <end position="25"/>
    </location>
</feature>
<feature type="chain" id="PRO_0000014346" description="Alpha-amylase/trypsin inhibitor CM3">
    <location>
        <begin position="26"/>
        <end position="168"/>
    </location>
</feature>